<feature type="chain" id="PRO_0000294441" description="WD repeat-containing protein 38">
    <location>
        <begin position="1"/>
        <end position="303"/>
    </location>
</feature>
<feature type="repeat" description="WD 1">
    <location>
        <begin position="24"/>
        <end position="63"/>
    </location>
</feature>
<feature type="repeat" description="WD 2">
    <location>
        <begin position="66"/>
        <end position="105"/>
    </location>
</feature>
<feature type="repeat" description="WD 3">
    <location>
        <begin position="108"/>
        <end position="147"/>
    </location>
</feature>
<feature type="repeat" description="WD 4">
    <location>
        <begin position="150"/>
        <end position="189"/>
    </location>
</feature>
<feature type="repeat" description="WD 5">
    <location>
        <begin position="195"/>
        <end position="233"/>
    </location>
</feature>
<feature type="repeat" description="WD 6">
    <location>
        <begin position="236"/>
        <end position="277"/>
    </location>
</feature>
<feature type="repeat" description="WD 7">
    <location>
        <begin position="279"/>
        <end position="303"/>
    </location>
</feature>
<name>WDR38_MOUSE</name>
<reference key="1">
    <citation type="journal article" date="2005" name="Science">
        <title>The transcriptional landscape of the mammalian genome.</title>
        <authorList>
            <person name="Carninci P."/>
            <person name="Kasukawa T."/>
            <person name="Katayama S."/>
            <person name="Gough J."/>
            <person name="Frith M.C."/>
            <person name="Maeda N."/>
            <person name="Oyama R."/>
            <person name="Ravasi T."/>
            <person name="Lenhard B."/>
            <person name="Wells C."/>
            <person name="Kodzius R."/>
            <person name="Shimokawa K."/>
            <person name="Bajic V.B."/>
            <person name="Brenner S.E."/>
            <person name="Batalov S."/>
            <person name="Forrest A.R."/>
            <person name="Zavolan M."/>
            <person name="Davis M.J."/>
            <person name="Wilming L.G."/>
            <person name="Aidinis V."/>
            <person name="Allen J.E."/>
            <person name="Ambesi-Impiombato A."/>
            <person name="Apweiler R."/>
            <person name="Aturaliya R.N."/>
            <person name="Bailey T.L."/>
            <person name="Bansal M."/>
            <person name="Baxter L."/>
            <person name="Beisel K.W."/>
            <person name="Bersano T."/>
            <person name="Bono H."/>
            <person name="Chalk A.M."/>
            <person name="Chiu K.P."/>
            <person name="Choudhary V."/>
            <person name="Christoffels A."/>
            <person name="Clutterbuck D.R."/>
            <person name="Crowe M.L."/>
            <person name="Dalla E."/>
            <person name="Dalrymple B.P."/>
            <person name="de Bono B."/>
            <person name="Della Gatta G."/>
            <person name="di Bernardo D."/>
            <person name="Down T."/>
            <person name="Engstrom P."/>
            <person name="Fagiolini M."/>
            <person name="Faulkner G."/>
            <person name="Fletcher C.F."/>
            <person name="Fukushima T."/>
            <person name="Furuno M."/>
            <person name="Futaki S."/>
            <person name="Gariboldi M."/>
            <person name="Georgii-Hemming P."/>
            <person name="Gingeras T.R."/>
            <person name="Gojobori T."/>
            <person name="Green R.E."/>
            <person name="Gustincich S."/>
            <person name="Harbers M."/>
            <person name="Hayashi Y."/>
            <person name="Hensch T.K."/>
            <person name="Hirokawa N."/>
            <person name="Hill D."/>
            <person name="Huminiecki L."/>
            <person name="Iacono M."/>
            <person name="Ikeo K."/>
            <person name="Iwama A."/>
            <person name="Ishikawa T."/>
            <person name="Jakt M."/>
            <person name="Kanapin A."/>
            <person name="Katoh M."/>
            <person name="Kawasawa Y."/>
            <person name="Kelso J."/>
            <person name="Kitamura H."/>
            <person name="Kitano H."/>
            <person name="Kollias G."/>
            <person name="Krishnan S.P."/>
            <person name="Kruger A."/>
            <person name="Kummerfeld S.K."/>
            <person name="Kurochkin I.V."/>
            <person name="Lareau L.F."/>
            <person name="Lazarevic D."/>
            <person name="Lipovich L."/>
            <person name="Liu J."/>
            <person name="Liuni S."/>
            <person name="McWilliam S."/>
            <person name="Madan Babu M."/>
            <person name="Madera M."/>
            <person name="Marchionni L."/>
            <person name="Matsuda H."/>
            <person name="Matsuzawa S."/>
            <person name="Miki H."/>
            <person name="Mignone F."/>
            <person name="Miyake S."/>
            <person name="Morris K."/>
            <person name="Mottagui-Tabar S."/>
            <person name="Mulder N."/>
            <person name="Nakano N."/>
            <person name="Nakauchi H."/>
            <person name="Ng P."/>
            <person name="Nilsson R."/>
            <person name="Nishiguchi S."/>
            <person name="Nishikawa S."/>
            <person name="Nori F."/>
            <person name="Ohara O."/>
            <person name="Okazaki Y."/>
            <person name="Orlando V."/>
            <person name="Pang K.C."/>
            <person name="Pavan W.J."/>
            <person name="Pavesi G."/>
            <person name="Pesole G."/>
            <person name="Petrovsky N."/>
            <person name="Piazza S."/>
            <person name="Reed J."/>
            <person name="Reid J.F."/>
            <person name="Ring B.Z."/>
            <person name="Ringwald M."/>
            <person name="Rost B."/>
            <person name="Ruan Y."/>
            <person name="Salzberg S.L."/>
            <person name="Sandelin A."/>
            <person name="Schneider C."/>
            <person name="Schoenbach C."/>
            <person name="Sekiguchi K."/>
            <person name="Semple C.A."/>
            <person name="Seno S."/>
            <person name="Sessa L."/>
            <person name="Sheng Y."/>
            <person name="Shibata Y."/>
            <person name="Shimada H."/>
            <person name="Shimada K."/>
            <person name="Silva D."/>
            <person name="Sinclair B."/>
            <person name="Sperling S."/>
            <person name="Stupka E."/>
            <person name="Sugiura K."/>
            <person name="Sultana R."/>
            <person name="Takenaka Y."/>
            <person name="Taki K."/>
            <person name="Tammoja K."/>
            <person name="Tan S.L."/>
            <person name="Tang S."/>
            <person name="Taylor M.S."/>
            <person name="Tegner J."/>
            <person name="Teichmann S.A."/>
            <person name="Ueda H.R."/>
            <person name="van Nimwegen E."/>
            <person name="Verardo R."/>
            <person name="Wei C.L."/>
            <person name="Yagi K."/>
            <person name="Yamanishi H."/>
            <person name="Zabarovsky E."/>
            <person name="Zhu S."/>
            <person name="Zimmer A."/>
            <person name="Hide W."/>
            <person name="Bult C."/>
            <person name="Grimmond S.M."/>
            <person name="Teasdale R.D."/>
            <person name="Liu E.T."/>
            <person name="Brusic V."/>
            <person name="Quackenbush J."/>
            <person name="Wahlestedt C."/>
            <person name="Mattick J.S."/>
            <person name="Hume D.A."/>
            <person name="Kai C."/>
            <person name="Sasaki D."/>
            <person name="Tomaru Y."/>
            <person name="Fukuda S."/>
            <person name="Kanamori-Katayama M."/>
            <person name="Suzuki M."/>
            <person name="Aoki J."/>
            <person name="Arakawa T."/>
            <person name="Iida J."/>
            <person name="Imamura K."/>
            <person name="Itoh M."/>
            <person name="Kato T."/>
            <person name="Kawaji H."/>
            <person name="Kawagashira N."/>
            <person name="Kawashima T."/>
            <person name="Kojima M."/>
            <person name="Kondo S."/>
            <person name="Konno H."/>
            <person name="Nakano K."/>
            <person name="Ninomiya N."/>
            <person name="Nishio T."/>
            <person name="Okada M."/>
            <person name="Plessy C."/>
            <person name="Shibata K."/>
            <person name="Shiraki T."/>
            <person name="Suzuki S."/>
            <person name="Tagami M."/>
            <person name="Waki K."/>
            <person name="Watahiki A."/>
            <person name="Okamura-Oho Y."/>
            <person name="Suzuki H."/>
            <person name="Kawai J."/>
            <person name="Hayashizaki Y."/>
        </authorList>
    </citation>
    <scope>NUCLEOTIDE SEQUENCE [LARGE SCALE MRNA]</scope>
    <source>
        <strain>C57BL/6J</strain>
        <tissue>Testis</tissue>
    </source>
</reference>
<reference key="2">
    <citation type="journal article" date="2009" name="PLoS Biol.">
        <title>Lineage-specific biology revealed by a finished genome assembly of the mouse.</title>
        <authorList>
            <person name="Church D.M."/>
            <person name="Goodstadt L."/>
            <person name="Hillier L.W."/>
            <person name="Zody M.C."/>
            <person name="Goldstein S."/>
            <person name="She X."/>
            <person name="Bult C.J."/>
            <person name="Agarwala R."/>
            <person name="Cherry J.L."/>
            <person name="DiCuccio M."/>
            <person name="Hlavina W."/>
            <person name="Kapustin Y."/>
            <person name="Meric P."/>
            <person name="Maglott D."/>
            <person name="Birtle Z."/>
            <person name="Marques A.C."/>
            <person name="Graves T."/>
            <person name="Zhou S."/>
            <person name="Teague B."/>
            <person name="Potamousis K."/>
            <person name="Churas C."/>
            <person name="Place M."/>
            <person name="Herschleb J."/>
            <person name="Runnheim R."/>
            <person name="Forrest D."/>
            <person name="Amos-Landgraf J."/>
            <person name="Schwartz D.C."/>
            <person name="Cheng Z."/>
            <person name="Lindblad-Toh K."/>
            <person name="Eichler E.E."/>
            <person name="Ponting C.P."/>
        </authorList>
    </citation>
    <scope>NUCLEOTIDE SEQUENCE [LARGE SCALE GENOMIC DNA]</scope>
    <source>
        <strain>C57BL/6J</strain>
    </source>
</reference>
<reference key="3">
    <citation type="journal article" date="2004" name="Genome Res.">
        <title>The status, quality, and expansion of the NIH full-length cDNA project: the Mammalian Gene Collection (MGC).</title>
        <authorList>
            <consortium name="The MGC Project Team"/>
        </authorList>
    </citation>
    <scope>NUCLEOTIDE SEQUENCE [LARGE SCALE MRNA]</scope>
</reference>
<proteinExistence type="evidence at transcript level"/>
<gene>
    <name type="primary">Wdr38</name>
</gene>
<dbReference type="EMBL" id="AK007246">
    <property type="protein sequence ID" value="BAB24913.1"/>
    <property type="molecule type" value="mRNA"/>
</dbReference>
<dbReference type="EMBL" id="AK077027">
    <property type="protein sequence ID" value="BAC36575.1"/>
    <property type="molecule type" value="mRNA"/>
</dbReference>
<dbReference type="EMBL" id="AL844588">
    <property type="status" value="NOT_ANNOTATED_CDS"/>
    <property type="molecule type" value="Genomic_DNA"/>
</dbReference>
<dbReference type="EMBL" id="BC115629">
    <property type="protein sequence ID" value="AAI15630.1"/>
    <property type="molecule type" value="mRNA"/>
</dbReference>
<dbReference type="CCDS" id="CCDS38119.1"/>
<dbReference type="RefSeq" id="NP_083963.1">
    <property type="nucleotide sequence ID" value="NM_029687.4"/>
</dbReference>
<dbReference type="SMR" id="Q9D994"/>
<dbReference type="FunCoup" id="Q9D994">
    <property type="interactions" value="1"/>
</dbReference>
<dbReference type="STRING" id="10090.ENSMUSP00000108493"/>
<dbReference type="iPTMnet" id="Q9D994"/>
<dbReference type="PhosphoSitePlus" id="Q9D994"/>
<dbReference type="PaxDb" id="10090-ENSMUSP00000108493"/>
<dbReference type="ProteomicsDB" id="297646"/>
<dbReference type="Antibodypedia" id="64851">
    <property type="antibodies" value="19 antibodies from 11 providers"/>
</dbReference>
<dbReference type="DNASU" id="76646"/>
<dbReference type="Ensembl" id="ENSMUST00000039535.9">
    <property type="protein sequence ID" value="ENSMUSP00000043834.2"/>
    <property type="gene ID" value="ENSMUSG00000035295.11"/>
</dbReference>
<dbReference type="Ensembl" id="ENSMUST00000112872.2">
    <property type="protein sequence ID" value="ENSMUSP00000108493.2"/>
    <property type="gene ID" value="ENSMUSG00000035295.11"/>
</dbReference>
<dbReference type="GeneID" id="76646"/>
<dbReference type="KEGG" id="mmu:76646"/>
<dbReference type="UCSC" id="uc008jnx.2">
    <property type="organism name" value="mouse"/>
</dbReference>
<dbReference type="AGR" id="MGI:1923896"/>
<dbReference type="CTD" id="401551"/>
<dbReference type="MGI" id="MGI:1923896">
    <property type="gene designation" value="Wdr38"/>
</dbReference>
<dbReference type="VEuPathDB" id="HostDB:ENSMUSG00000035295"/>
<dbReference type="eggNOG" id="KOG0263">
    <property type="taxonomic scope" value="Eukaryota"/>
</dbReference>
<dbReference type="eggNOG" id="KOG0266">
    <property type="taxonomic scope" value="Eukaryota"/>
</dbReference>
<dbReference type="GeneTree" id="ENSGT00940000162358"/>
<dbReference type="HOGENOM" id="CLU_000288_57_33_1"/>
<dbReference type="InParanoid" id="Q9D994"/>
<dbReference type="OMA" id="ELCHHTE"/>
<dbReference type="OrthoDB" id="674604at2759"/>
<dbReference type="PhylomeDB" id="Q9D994"/>
<dbReference type="TreeFam" id="TF328741"/>
<dbReference type="BioGRID-ORCS" id="76646">
    <property type="hits" value="3 hits in 76 CRISPR screens"/>
</dbReference>
<dbReference type="PRO" id="PR:Q9D994"/>
<dbReference type="Proteomes" id="UP000000589">
    <property type="component" value="Chromosome 2"/>
</dbReference>
<dbReference type="RNAct" id="Q9D994">
    <property type="molecule type" value="protein"/>
</dbReference>
<dbReference type="Bgee" id="ENSMUSG00000035295">
    <property type="expression patterns" value="Expressed in spermatid and 144 other cell types or tissues"/>
</dbReference>
<dbReference type="GO" id="GO:0002244">
    <property type="term" value="P:hematopoietic progenitor cell differentiation"/>
    <property type="evidence" value="ECO:0000315"/>
    <property type="project" value="MGI"/>
</dbReference>
<dbReference type="CDD" id="cd00200">
    <property type="entry name" value="WD40"/>
    <property type="match status" value="1"/>
</dbReference>
<dbReference type="Gene3D" id="2.130.10.10">
    <property type="entry name" value="YVTN repeat-like/Quinoprotein amine dehydrogenase"/>
    <property type="match status" value="3"/>
</dbReference>
<dbReference type="InterPro" id="IPR020472">
    <property type="entry name" value="G-protein_beta_WD-40_rep"/>
</dbReference>
<dbReference type="InterPro" id="IPR015943">
    <property type="entry name" value="WD40/YVTN_repeat-like_dom_sf"/>
</dbReference>
<dbReference type="InterPro" id="IPR019775">
    <property type="entry name" value="WD40_repeat_CS"/>
</dbReference>
<dbReference type="InterPro" id="IPR036322">
    <property type="entry name" value="WD40_repeat_dom_sf"/>
</dbReference>
<dbReference type="InterPro" id="IPR001680">
    <property type="entry name" value="WD40_rpt"/>
</dbReference>
<dbReference type="PANTHER" id="PTHR19879">
    <property type="entry name" value="TRANSCRIPTION INITIATION FACTOR TFIID"/>
    <property type="match status" value="1"/>
</dbReference>
<dbReference type="PANTHER" id="PTHR19879:SF9">
    <property type="entry name" value="TRANSCRIPTION INITIATION FACTOR TFIID SUBUNIT 5"/>
    <property type="match status" value="1"/>
</dbReference>
<dbReference type="Pfam" id="PF00400">
    <property type="entry name" value="WD40"/>
    <property type="match status" value="6"/>
</dbReference>
<dbReference type="PRINTS" id="PR00320">
    <property type="entry name" value="GPROTEINBRPT"/>
</dbReference>
<dbReference type="SMART" id="SM00320">
    <property type="entry name" value="WD40"/>
    <property type="match status" value="6"/>
</dbReference>
<dbReference type="SUPFAM" id="SSF50978">
    <property type="entry name" value="WD40 repeat-like"/>
    <property type="match status" value="1"/>
</dbReference>
<dbReference type="PROSITE" id="PS00678">
    <property type="entry name" value="WD_REPEATS_1"/>
    <property type="match status" value="3"/>
</dbReference>
<dbReference type="PROSITE" id="PS50082">
    <property type="entry name" value="WD_REPEATS_2"/>
    <property type="match status" value="6"/>
</dbReference>
<dbReference type="PROSITE" id="PS50294">
    <property type="entry name" value="WD_REPEATS_REGION"/>
    <property type="match status" value="1"/>
</dbReference>
<protein>
    <recommendedName>
        <fullName>WD repeat-containing protein 38</fullName>
    </recommendedName>
</protein>
<organism>
    <name type="scientific">Mus musculus</name>
    <name type="common">Mouse</name>
    <dbReference type="NCBI Taxonomy" id="10090"/>
    <lineage>
        <taxon>Eukaryota</taxon>
        <taxon>Metazoa</taxon>
        <taxon>Chordata</taxon>
        <taxon>Craniata</taxon>
        <taxon>Vertebrata</taxon>
        <taxon>Euteleostomi</taxon>
        <taxon>Mammalia</taxon>
        <taxon>Eutheria</taxon>
        <taxon>Euarchontoglires</taxon>
        <taxon>Glires</taxon>
        <taxon>Rodentia</taxon>
        <taxon>Myomorpha</taxon>
        <taxon>Muroidea</taxon>
        <taxon>Muridae</taxon>
        <taxon>Murinae</taxon>
        <taxon>Mus</taxon>
        <taxon>Mus</taxon>
    </lineage>
</organism>
<accession>Q9D994</accession>
<sequence>MEWAPMNIRAPTRLAVGRVRFYGQHHGEVNCSAFSPDGRTLLTASDDGCVYVWGTKSGRLLWRLAGHRGPVKSCCFSPDGRLIASSSSDHSIRLWDVARSKCLHVLKGHQRSVETVSFSPDSKQLASGGWDKRAIVWEVQSGRRVHLLVGHCDSIQSSDFSPTSDSLATGSWDSTVHIWDLRASTPVVSYHNLEGHTGNISCLCYSASGLLASGSWDKTICVWKPTTNNLPLQLKGHTIWVNSLAFSPDELKLASAGYSRTVKVWDCLTGKCLETLKGMLDVAHACIFTPDGKLLVSGAAVTR</sequence>
<keyword id="KW-1185">Reference proteome</keyword>
<keyword id="KW-0677">Repeat</keyword>
<keyword id="KW-0853">WD repeat</keyword>